<organism>
    <name type="scientific">Escherichia coli O127:H6 (strain E2348/69 / EPEC)</name>
    <dbReference type="NCBI Taxonomy" id="574521"/>
    <lineage>
        <taxon>Bacteria</taxon>
        <taxon>Pseudomonadati</taxon>
        <taxon>Pseudomonadota</taxon>
        <taxon>Gammaproteobacteria</taxon>
        <taxon>Enterobacterales</taxon>
        <taxon>Enterobacteriaceae</taxon>
        <taxon>Escherichia</taxon>
    </lineage>
</organism>
<keyword id="KW-0012">Acyltransferase</keyword>
<keyword id="KW-0067">ATP-binding</keyword>
<keyword id="KW-0997">Cell inner membrane</keyword>
<keyword id="KW-1003">Cell membrane</keyword>
<keyword id="KW-0436">Ligase</keyword>
<keyword id="KW-0472">Membrane</keyword>
<keyword id="KW-0511">Multifunctional enzyme</keyword>
<keyword id="KW-0547">Nucleotide-binding</keyword>
<keyword id="KW-1185">Reference proteome</keyword>
<keyword id="KW-0808">Transferase</keyword>
<keyword id="KW-0812">Transmembrane</keyword>
<keyword id="KW-1133">Transmembrane helix</keyword>
<accession>B7UHQ4</accession>
<protein>
    <recommendedName>
        <fullName evidence="1">Bifunctional protein Aas</fullName>
    </recommendedName>
    <domain>
        <recommendedName>
            <fullName evidence="1">2-acylglycerophosphoethanolamine acyltransferase</fullName>
            <ecNumber evidence="1">2.3.1.40</ecNumber>
        </recommendedName>
        <alternativeName>
            <fullName evidence="1">2-acyl-GPE acyltransferase</fullName>
        </alternativeName>
        <alternativeName>
            <fullName evidence="1">Acyl-[acyl-carrier-protein]--phospholipid O-acyltransferase</fullName>
        </alternativeName>
    </domain>
    <domain>
        <recommendedName>
            <fullName evidence="1">Acyl-[acyl-carrier-protein] synthetase</fullName>
            <ecNumber evidence="1">6.2.1.20</ecNumber>
        </recommendedName>
        <alternativeName>
            <fullName evidence="1">Acyl-ACP synthetase</fullName>
        </alternativeName>
        <alternativeName>
            <fullName evidence="1">Long-chain-fatty-acid--[acyl-carrier-protein] ligase</fullName>
        </alternativeName>
    </domain>
</protein>
<evidence type="ECO:0000255" key="1">
    <source>
        <dbReference type="HAMAP-Rule" id="MF_01162"/>
    </source>
</evidence>
<gene>
    <name evidence="1" type="primary">aas</name>
    <name type="ordered locus">E2348C_3106</name>
</gene>
<reference key="1">
    <citation type="journal article" date="2009" name="J. Bacteriol.">
        <title>Complete genome sequence and comparative genome analysis of enteropathogenic Escherichia coli O127:H6 strain E2348/69.</title>
        <authorList>
            <person name="Iguchi A."/>
            <person name="Thomson N.R."/>
            <person name="Ogura Y."/>
            <person name="Saunders D."/>
            <person name="Ooka T."/>
            <person name="Henderson I.R."/>
            <person name="Harris D."/>
            <person name="Asadulghani M."/>
            <person name="Kurokawa K."/>
            <person name="Dean P."/>
            <person name="Kenny B."/>
            <person name="Quail M.A."/>
            <person name="Thurston S."/>
            <person name="Dougan G."/>
            <person name="Hayashi T."/>
            <person name="Parkhill J."/>
            <person name="Frankel G."/>
        </authorList>
    </citation>
    <scope>NUCLEOTIDE SEQUENCE [LARGE SCALE GENOMIC DNA]</scope>
    <source>
        <strain>E2348/69 / EPEC</strain>
    </source>
</reference>
<proteinExistence type="inferred from homology"/>
<name>AAS_ECO27</name>
<sequence>MLFSFFRNLCRVLYRVRVTGDTKALKGERVLITPNHVSFIDGILLALFLPVRPVFAVYTSISQQWYMRWLKSFIDFVPLDPTQPMAIKHLVRLVEQGRPVVIFPEGRITTTGSLMKIYDGAGFVAAKSGATVIPVRIEGAELTHFSRLKGLVKRRLFPQITLHILPPTQVEMPDAPRARDRRKIAGEMLHQIMMEARMAVRPRETLYESLLSAMYRFGAGKKCVEDVNFTPDSYRKLLTKTLFVGRILEKYSVEGERIGLMLPNAGISAAVIFGAIARRRIPAMMNYTAGVKGLTSAITAAEIKTIFTSRQFLDKGKLWHLPEQLTQVRWVYLEDLKADVTTADKVWIFAHLLMPRLAQLKQQPEEEALILFTSGSEGHPKGVVHSHKSILANVEQIKTIADFTTNDRFMSALPLFHSFGLTVGLFTPLLTGAEVFLYPSPLHYRIVPELVYDRSCTVLFGTSTFLGHYARFANPYDFYRLRYVVAGAEKLQESTKQLWQDKFGLRILEGYGVTECAPVVSINVPMAAKPGTVGRILPGMDARLLSVPGIEEGGRLQLKGPNIMNGYLRVEKPGVLEVPTAENVRGEMERGWYDTGDIVRFDEQGFVQIQGRAKRFAKIAGEMVSLEMVEQLALGVSPDKVHATAIKSDASKGEALVLFTTDNELTRDKLQQYAREHGVPELAVPRDIRYLKQMPLLGSGKPDFVTLKSWVDEAEQHDE</sequence>
<feature type="chain" id="PRO_1000164345" description="Bifunctional protein Aas">
    <location>
        <begin position="1"/>
        <end position="719"/>
    </location>
</feature>
<feature type="transmembrane region" description="Helical" evidence="1">
    <location>
        <begin position="258"/>
        <end position="277"/>
    </location>
</feature>
<feature type="transmembrane region" description="Helical" evidence="1">
    <location>
        <begin position="409"/>
        <end position="433"/>
    </location>
</feature>
<feature type="region of interest" description="Acyltransferase">
    <location>
        <begin position="15"/>
        <end position="138"/>
    </location>
</feature>
<feature type="region of interest" description="AMP-binding">
    <location>
        <begin position="233"/>
        <end position="646"/>
    </location>
</feature>
<feature type="active site" evidence="1">
    <location>
        <position position="36"/>
    </location>
</feature>
<comment type="function">
    <text evidence="1">Plays a role in lysophospholipid acylation. Transfers fatty acids to the 1-position via an enzyme-bound acyl-ACP intermediate in the presence of ATP and magnesium. Its physiological function is to regenerate phosphatidylethanolamine from 2-acyl-glycero-3-phosphoethanolamine (2-acyl-GPE) formed by transacylation reactions or degradation by phospholipase A1.</text>
</comment>
<comment type="catalytic activity">
    <reaction evidence="1">
        <text>a 2-acyl-sn-glycero-3-phosphoethanolamine + a fatty acyl-[ACP] = a 1,2-diacyl-sn-glycero-3-phosphoethanolamine + holo-[ACP]</text>
        <dbReference type="Rhea" id="RHEA:10304"/>
        <dbReference type="Rhea" id="RHEA-COMP:9685"/>
        <dbReference type="Rhea" id="RHEA-COMP:14125"/>
        <dbReference type="ChEBI" id="CHEBI:64479"/>
        <dbReference type="ChEBI" id="CHEBI:64612"/>
        <dbReference type="ChEBI" id="CHEBI:65213"/>
        <dbReference type="ChEBI" id="CHEBI:138651"/>
        <dbReference type="EC" id="2.3.1.40"/>
    </reaction>
</comment>
<comment type="catalytic activity">
    <reaction evidence="1">
        <text>a long-chain fatty acid + holo-[ACP] + ATP = a long-chain fatty acyl-[ACP] + AMP + diphosphate</text>
        <dbReference type="Rhea" id="RHEA:45588"/>
        <dbReference type="Rhea" id="RHEA-COMP:9685"/>
        <dbReference type="Rhea" id="RHEA-COMP:12682"/>
        <dbReference type="ChEBI" id="CHEBI:30616"/>
        <dbReference type="ChEBI" id="CHEBI:33019"/>
        <dbReference type="ChEBI" id="CHEBI:57560"/>
        <dbReference type="ChEBI" id="CHEBI:64479"/>
        <dbReference type="ChEBI" id="CHEBI:133243"/>
        <dbReference type="ChEBI" id="CHEBI:456215"/>
        <dbReference type="EC" id="6.2.1.20"/>
    </reaction>
</comment>
<comment type="subcellular location">
    <subcellularLocation>
        <location evidence="1">Cell inner membrane</location>
        <topology evidence="1">Multi-pass membrane protein</topology>
    </subcellularLocation>
</comment>
<comment type="similarity">
    <text evidence="1">In the N-terminal section; belongs to the 2-acyl-GPE acetyltransferase family.</text>
</comment>
<comment type="similarity">
    <text evidence="1">In the C-terminal section; belongs to the ATP-dependent AMP-binding enzyme family.</text>
</comment>
<dbReference type="EC" id="2.3.1.40" evidence="1"/>
<dbReference type="EC" id="6.2.1.20" evidence="1"/>
<dbReference type="EMBL" id="FM180568">
    <property type="protein sequence ID" value="CAS10654.1"/>
    <property type="molecule type" value="Genomic_DNA"/>
</dbReference>
<dbReference type="RefSeq" id="WP_000899022.1">
    <property type="nucleotide sequence ID" value="NC_011601.1"/>
</dbReference>
<dbReference type="SMR" id="B7UHQ4"/>
<dbReference type="KEGG" id="ecg:E2348C_3106"/>
<dbReference type="HOGENOM" id="CLU_000022_59_8_6"/>
<dbReference type="Proteomes" id="UP000008205">
    <property type="component" value="Chromosome"/>
</dbReference>
<dbReference type="GO" id="GO:0005886">
    <property type="term" value="C:plasma membrane"/>
    <property type="evidence" value="ECO:0007669"/>
    <property type="project" value="UniProtKB-SubCell"/>
</dbReference>
<dbReference type="GO" id="GO:0008779">
    <property type="term" value="F:acyl-[acyl-carrier-protein]-phospholipid O-acyltransferase activity"/>
    <property type="evidence" value="ECO:0007669"/>
    <property type="project" value="UniProtKB-UniRule"/>
</dbReference>
<dbReference type="GO" id="GO:0005524">
    <property type="term" value="F:ATP binding"/>
    <property type="evidence" value="ECO:0007669"/>
    <property type="project" value="UniProtKB-KW"/>
</dbReference>
<dbReference type="GO" id="GO:0008922">
    <property type="term" value="F:long-chain fatty acid [acyl-carrier-protein] ligase activity"/>
    <property type="evidence" value="ECO:0007669"/>
    <property type="project" value="UniProtKB-UniRule"/>
</dbReference>
<dbReference type="GO" id="GO:0031956">
    <property type="term" value="F:medium-chain fatty acid-CoA ligase activity"/>
    <property type="evidence" value="ECO:0007669"/>
    <property type="project" value="TreeGrafter"/>
</dbReference>
<dbReference type="GO" id="GO:0006631">
    <property type="term" value="P:fatty acid metabolic process"/>
    <property type="evidence" value="ECO:0007669"/>
    <property type="project" value="InterPro"/>
</dbReference>
<dbReference type="GO" id="GO:0008654">
    <property type="term" value="P:phospholipid biosynthetic process"/>
    <property type="evidence" value="ECO:0007669"/>
    <property type="project" value="InterPro"/>
</dbReference>
<dbReference type="CDD" id="cd05909">
    <property type="entry name" value="AAS_C"/>
    <property type="match status" value="1"/>
</dbReference>
<dbReference type="CDD" id="cd07989">
    <property type="entry name" value="LPLAT_AGPAT-like"/>
    <property type="match status" value="1"/>
</dbReference>
<dbReference type="FunFam" id="3.30.300.30:FF:000009">
    <property type="entry name" value="Bifunctional protein Aas"/>
    <property type="match status" value="1"/>
</dbReference>
<dbReference type="FunFam" id="3.40.50.12780:FF:000009">
    <property type="entry name" value="Bifunctional protein Aas"/>
    <property type="match status" value="1"/>
</dbReference>
<dbReference type="Gene3D" id="3.30.300.30">
    <property type="match status" value="1"/>
</dbReference>
<dbReference type="Gene3D" id="3.40.50.12780">
    <property type="entry name" value="N-terminal domain of ligase-like"/>
    <property type="match status" value="1"/>
</dbReference>
<dbReference type="HAMAP" id="MF_01162">
    <property type="entry name" value="Aas"/>
    <property type="match status" value="1"/>
</dbReference>
<dbReference type="InterPro" id="IPR023775">
    <property type="entry name" value="Aas"/>
</dbReference>
<dbReference type="InterPro" id="IPR045851">
    <property type="entry name" value="AMP-bd_C_sf"/>
</dbReference>
<dbReference type="InterPro" id="IPR020845">
    <property type="entry name" value="AMP-binding_CS"/>
</dbReference>
<dbReference type="InterPro" id="IPR000873">
    <property type="entry name" value="AMP-dep_synth/lig_dom"/>
</dbReference>
<dbReference type="InterPro" id="IPR042099">
    <property type="entry name" value="ANL_N_sf"/>
</dbReference>
<dbReference type="InterPro" id="IPR002123">
    <property type="entry name" value="Plipid/glycerol_acylTrfase"/>
</dbReference>
<dbReference type="NCBIfam" id="NF005959">
    <property type="entry name" value="PRK08043.1"/>
    <property type="match status" value="1"/>
</dbReference>
<dbReference type="PANTHER" id="PTHR43201">
    <property type="entry name" value="ACYL-COA SYNTHETASE"/>
    <property type="match status" value="1"/>
</dbReference>
<dbReference type="PANTHER" id="PTHR43201:SF8">
    <property type="entry name" value="ACYL-COA SYNTHETASE FAMILY MEMBER 3"/>
    <property type="match status" value="1"/>
</dbReference>
<dbReference type="Pfam" id="PF01553">
    <property type="entry name" value="Acyltransferase"/>
    <property type="match status" value="1"/>
</dbReference>
<dbReference type="Pfam" id="PF00501">
    <property type="entry name" value="AMP-binding"/>
    <property type="match status" value="1"/>
</dbReference>
<dbReference type="SMART" id="SM00563">
    <property type="entry name" value="PlsC"/>
    <property type="match status" value="1"/>
</dbReference>
<dbReference type="SUPFAM" id="SSF56801">
    <property type="entry name" value="Acetyl-CoA synthetase-like"/>
    <property type="match status" value="1"/>
</dbReference>
<dbReference type="SUPFAM" id="SSF69593">
    <property type="entry name" value="Glycerol-3-phosphate (1)-acyltransferase"/>
    <property type="match status" value="1"/>
</dbReference>
<dbReference type="PROSITE" id="PS00455">
    <property type="entry name" value="AMP_BINDING"/>
    <property type="match status" value="1"/>
</dbReference>